<comment type="function">
    <text evidence="1">Participates in various redox reactions through the reversible oxidation of its active center dithiol to a disulfide and catalyzes dithiol-disulfide exchange reactions (By similarity). Plays a role in the reversible S-nitrosylation of cysteine residues in target proteins, and thereby contributes to the response to intracellular nitric oxide. Nitrosylates the active site Cys of CASP3 in response to nitric oxide (NO), and thereby inhibits caspase-3 activity. Induces the FOS/JUN AP-1 DNA binding activity in ionizing radiation (IR) cells through its oxidation/reduction status and stimulates AP-1 transcriptional activity (By similarity).</text>
</comment>
<comment type="subunit">
    <text evidence="1">Homodimer; disulfide-linked. Interacts with TXNIP through the redox-active site. Interacts with MAP3K5 and CASP3. Interacts with APEX1; the interaction stimulates the FOS/JUN AP-1 DNA-binding activity in a redox-dependent manner (By similarity).</text>
</comment>
<comment type="subcellular location">
    <subcellularLocation>
        <location evidence="2">Nucleus</location>
    </subcellularLocation>
    <subcellularLocation>
        <location evidence="2">Cytoplasm</location>
    </subcellularLocation>
    <subcellularLocation>
        <location evidence="2">Secreted</location>
    </subcellularLocation>
    <text evidence="2">Translocates from the cytoplasm into the nucleus after phorbol 12-myristate 13-acetate induction (PMA). Predominantly in the cytoplasm in non irradiated cells. Radiation induces translocation of TRX from the cytoplasm to the nucleus. Secreted by a leaderless secretory pathway.</text>
</comment>
<comment type="PTM">
    <text evidence="1">In the fully reduced protein, both Cys-69 and Cys-73 are nitrosylated in response to nitric oxide (NO). When two disulfide bonds are present in the protein, only Cys-73 is nitrosylated. Cys-73 can serve as donor for nitrosylation of target proteins (By similarity).</text>
</comment>
<comment type="similarity">
    <text evidence="6">Belongs to the thioredoxin family.</text>
</comment>
<sequence>MVKLIESKEAFQEALAAAGDKLVVVDFSATWCGPCKMIKPFFHSLCDKYSNVVFLEVDVDDCQDVAADCEVKCMPTFQFYKKGQKVGEFSGANKEKLEATITEFA</sequence>
<evidence type="ECO:0000250" key="1"/>
<evidence type="ECO:0000250" key="2">
    <source>
        <dbReference type="UniProtKB" id="P10599"/>
    </source>
</evidence>
<evidence type="ECO:0000250" key="3">
    <source>
        <dbReference type="UniProtKB" id="P10639"/>
    </source>
</evidence>
<evidence type="ECO:0000255" key="4">
    <source>
        <dbReference type="PROSITE-ProRule" id="PRU00691"/>
    </source>
</evidence>
<evidence type="ECO:0000269" key="5">
    <source>
    </source>
</evidence>
<evidence type="ECO:0000305" key="6"/>
<reference key="1">
    <citation type="journal article" date="1989" name="Nucleic Acids Res.">
        <title>Nucleotide sequence of a cDNA encoding rat thioredoxin.</title>
        <authorList>
            <person name="Tonissen K.F."/>
            <person name="Robins A.J."/>
            <person name="Wells J.R.E."/>
        </authorList>
    </citation>
    <scope>NUCLEOTIDE SEQUENCE [MRNA]</scope>
    <source>
        <tissue>Liver</tissue>
    </source>
</reference>
<reference key="2">
    <citation type="submission" date="2000-10" db="EMBL/GenBank/DDBJ databases">
        <authorList>
            <person name="Xie Z.H."/>
            <person name="Liu C.Z."/>
            <person name="He Y.H."/>
            <person name="Wang A.M."/>
            <person name="Ma C."/>
        </authorList>
    </citation>
    <scope>NUCLEOTIDE SEQUENCE [MRNA]</scope>
</reference>
<reference key="3">
    <citation type="journal article" date="2004" name="Genome Res.">
        <title>The status, quality, and expansion of the NIH full-length cDNA project: the Mammalian Gene Collection (MGC).</title>
        <authorList>
            <consortium name="The MGC Project Team"/>
        </authorList>
    </citation>
    <scope>NUCLEOTIDE SEQUENCE [LARGE SCALE MRNA]</scope>
    <source>
        <tissue>Pituitary</tissue>
    </source>
</reference>
<reference key="4">
    <citation type="journal article" date="1994" name="Biochem. J.">
        <title>Characterization of a thioredoxin-related surface protein.</title>
        <authorList>
            <person name="Dean M.F."/>
            <person name="Martin H."/>
            <person name="Sansom P.A."/>
        </authorList>
    </citation>
    <scope>PROTEIN SEQUENCE OF 2-21</scope>
    <source>
        <tissue>Glial cell</tissue>
    </source>
</reference>
<reference key="5">
    <citation type="submission" date="2007-09" db="UniProtKB">
        <authorList>
            <person name="Lubec G."/>
            <person name="Diao W."/>
            <person name="Kang S.U."/>
            <person name="Lubec S."/>
        </authorList>
    </citation>
    <scope>PROTEIN SEQUENCE OF 9-21; 73-81 AND 86-94</scope>
    <scope>IDENTIFICATION BY MASS SPECTROMETRY</scope>
    <source>
        <strain>Sprague-Dawley</strain>
        <tissue>Brain</tissue>
        <tissue>Hippocampus</tissue>
    </source>
</reference>
<organism>
    <name type="scientific">Rattus norvegicus</name>
    <name type="common">Rat</name>
    <dbReference type="NCBI Taxonomy" id="10116"/>
    <lineage>
        <taxon>Eukaryota</taxon>
        <taxon>Metazoa</taxon>
        <taxon>Chordata</taxon>
        <taxon>Craniata</taxon>
        <taxon>Vertebrata</taxon>
        <taxon>Euteleostomi</taxon>
        <taxon>Mammalia</taxon>
        <taxon>Eutheria</taxon>
        <taxon>Euarchontoglires</taxon>
        <taxon>Glires</taxon>
        <taxon>Rodentia</taxon>
        <taxon>Myomorpha</taxon>
        <taxon>Muroidea</taxon>
        <taxon>Muridae</taxon>
        <taxon>Murinae</taxon>
        <taxon>Rattus</taxon>
    </lineage>
</organism>
<proteinExistence type="evidence at protein level"/>
<dbReference type="EMBL" id="X14878">
    <property type="protein sequence ID" value="CAA33019.1"/>
    <property type="molecule type" value="mRNA"/>
</dbReference>
<dbReference type="EMBL" id="AF311055">
    <property type="protein sequence ID" value="AAG49923.1"/>
    <property type="molecule type" value="mRNA"/>
</dbReference>
<dbReference type="EMBL" id="BC058454">
    <property type="protein sequence ID" value="AAH58454.1"/>
    <property type="molecule type" value="mRNA"/>
</dbReference>
<dbReference type="PIR" id="S04352">
    <property type="entry name" value="S04352"/>
</dbReference>
<dbReference type="RefSeq" id="NP_446252.1">
    <property type="nucleotide sequence ID" value="NM_053800.3"/>
</dbReference>
<dbReference type="SMR" id="P11232"/>
<dbReference type="BioGRID" id="250461">
    <property type="interactions" value="5"/>
</dbReference>
<dbReference type="CORUM" id="P11232"/>
<dbReference type="FunCoup" id="P11232">
    <property type="interactions" value="2010"/>
</dbReference>
<dbReference type="IntAct" id="P11232">
    <property type="interactions" value="2"/>
</dbReference>
<dbReference type="MINT" id="P11232"/>
<dbReference type="STRING" id="10116.ENSRNOP00000016447"/>
<dbReference type="iPTMnet" id="P11232"/>
<dbReference type="PhosphoSitePlus" id="P11232"/>
<dbReference type="SwissPalm" id="P11232"/>
<dbReference type="jPOST" id="P11232"/>
<dbReference type="PaxDb" id="10116-ENSRNOP00000016447"/>
<dbReference type="GeneID" id="116484"/>
<dbReference type="KEGG" id="rno:116484"/>
<dbReference type="UCSC" id="RGD:621157">
    <property type="organism name" value="rat"/>
</dbReference>
<dbReference type="AGR" id="RGD:621157"/>
<dbReference type="CTD" id="22166"/>
<dbReference type="RGD" id="621157">
    <property type="gene designation" value="Txn1"/>
</dbReference>
<dbReference type="eggNOG" id="KOG0907">
    <property type="taxonomic scope" value="Eukaryota"/>
</dbReference>
<dbReference type="InParanoid" id="P11232"/>
<dbReference type="OrthoDB" id="2121326at2759"/>
<dbReference type="PhylomeDB" id="P11232"/>
<dbReference type="TreeFam" id="TF318932"/>
<dbReference type="Reactome" id="R-RNO-2559580">
    <property type="pathway name" value="Oxidative Stress Induced Senescence"/>
</dbReference>
<dbReference type="Reactome" id="R-RNO-3299685">
    <property type="pathway name" value="Detoxification of Reactive Oxygen Species"/>
</dbReference>
<dbReference type="Reactome" id="R-RNO-499943">
    <property type="pathway name" value="Interconversion of nucleotide di- and triphosphates"/>
</dbReference>
<dbReference type="Reactome" id="R-RNO-5628897">
    <property type="pathway name" value="TP53 Regulates Metabolic Genes"/>
</dbReference>
<dbReference type="Reactome" id="R-RNO-5676934">
    <property type="pathway name" value="Protein repair"/>
</dbReference>
<dbReference type="Reactome" id="R-RNO-844456">
    <property type="pathway name" value="The NLRP3 inflammasome"/>
</dbReference>
<dbReference type="PRO" id="PR:P11232"/>
<dbReference type="Proteomes" id="UP000002494">
    <property type="component" value="Unplaced"/>
</dbReference>
<dbReference type="GO" id="GO:0030424">
    <property type="term" value="C:axon"/>
    <property type="evidence" value="ECO:0000314"/>
    <property type="project" value="RGD"/>
</dbReference>
<dbReference type="GO" id="GO:0005737">
    <property type="term" value="C:cytoplasm"/>
    <property type="evidence" value="ECO:0000266"/>
    <property type="project" value="RGD"/>
</dbReference>
<dbReference type="GO" id="GO:0005829">
    <property type="term" value="C:cytosol"/>
    <property type="evidence" value="ECO:0000266"/>
    <property type="project" value="RGD"/>
</dbReference>
<dbReference type="GO" id="GO:0030425">
    <property type="term" value="C:dendrite"/>
    <property type="evidence" value="ECO:0000314"/>
    <property type="project" value="RGD"/>
</dbReference>
<dbReference type="GO" id="GO:0005576">
    <property type="term" value="C:extracellular region"/>
    <property type="evidence" value="ECO:0000266"/>
    <property type="project" value="RGD"/>
</dbReference>
<dbReference type="GO" id="GO:0043025">
    <property type="term" value="C:neuronal cell body"/>
    <property type="evidence" value="ECO:0000314"/>
    <property type="project" value="RGD"/>
</dbReference>
<dbReference type="GO" id="GO:0005634">
    <property type="term" value="C:nucleus"/>
    <property type="evidence" value="ECO:0000266"/>
    <property type="project" value="RGD"/>
</dbReference>
<dbReference type="GO" id="GO:0019899">
    <property type="term" value="F:enzyme binding"/>
    <property type="evidence" value="ECO:0000353"/>
    <property type="project" value="RGD"/>
</dbReference>
<dbReference type="GO" id="GO:0042803">
    <property type="term" value="F:protein homodimerization activity"/>
    <property type="evidence" value="ECO:0000266"/>
    <property type="project" value="RGD"/>
</dbReference>
<dbReference type="GO" id="GO:0047134">
    <property type="term" value="F:protein-disulfide reductase [NAD(P)H] activity"/>
    <property type="evidence" value="ECO:0000266"/>
    <property type="project" value="RGD"/>
</dbReference>
<dbReference type="GO" id="GO:0015035">
    <property type="term" value="F:protein-disulfide reductase activity"/>
    <property type="evidence" value="ECO:0000266"/>
    <property type="project" value="RGD"/>
</dbReference>
<dbReference type="GO" id="GO:0004791">
    <property type="term" value="F:thioredoxin-disulfide reductase (NADPH) activity"/>
    <property type="evidence" value="ECO:0000304"/>
    <property type="project" value="RGD"/>
</dbReference>
<dbReference type="GO" id="GO:0045454">
    <property type="term" value="P:cell redox homeostasis"/>
    <property type="evidence" value="ECO:0000266"/>
    <property type="project" value="RGD"/>
</dbReference>
<dbReference type="GO" id="GO:0061692">
    <property type="term" value="P:cellular detoxification of hydrogen peroxide"/>
    <property type="evidence" value="ECO:0000266"/>
    <property type="project" value="RGD"/>
</dbReference>
<dbReference type="GO" id="GO:0071236">
    <property type="term" value="P:cellular response to antibiotic"/>
    <property type="evidence" value="ECO:0000270"/>
    <property type="project" value="RGD"/>
</dbReference>
<dbReference type="GO" id="GO:0071333">
    <property type="term" value="P:cellular response to glucose stimulus"/>
    <property type="evidence" value="ECO:0000270"/>
    <property type="project" value="RGD"/>
</dbReference>
<dbReference type="GO" id="GO:0071455">
    <property type="term" value="P:cellular response to hyperoxia"/>
    <property type="evidence" value="ECO:0000270"/>
    <property type="project" value="RGD"/>
</dbReference>
<dbReference type="GO" id="GO:0071466">
    <property type="term" value="P:cellular response to xenobiotic stimulus"/>
    <property type="evidence" value="ECO:0000270"/>
    <property type="project" value="RGD"/>
</dbReference>
<dbReference type="GO" id="GO:0046826">
    <property type="term" value="P:negative regulation of protein export from nucleus"/>
    <property type="evidence" value="ECO:0000266"/>
    <property type="project" value="RGD"/>
</dbReference>
<dbReference type="GO" id="GO:0000122">
    <property type="term" value="P:negative regulation of transcription by RNA polymerase II"/>
    <property type="evidence" value="ECO:0000266"/>
    <property type="project" value="RGD"/>
</dbReference>
<dbReference type="GO" id="GO:0043388">
    <property type="term" value="P:positive regulation of DNA binding"/>
    <property type="evidence" value="ECO:0000250"/>
    <property type="project" value="UniProtKB"/>
</dbReference>
<dbReference type="GO" id="GO:0051897">
    <property type="term" value="P:positive regulation of phosphatidylinositol 3-kinase/protein kinase B signal transduction"/>
    <property type="evidence" value="ECO:0000266"/>
    <property type="project" value="RGD"/>
</dbReference>
<dbReference type="GO" id="GO:0014823">
    <property type="term" value="P:response to activity"/>
    <property type="evidence" value="ECO:0000270"/>
    <property type="project" value="RGD"/>
</dbReference>
<dbReference type="GO" id="GO:0048678">
    <property type="term" value="P:response to axon injury"/>
    <property type="evidence" value="ECO:0000270"/>
    <property type="project" value="RGD"/>
</dbReference>
<dbReference type="GO" id="GO:0071548">
    <property type="term" value="P:response to dexamethasone"/>
    <property type="evidence" value="ECO:0000270"/>
    <property type="project" value="RGD"/>
</dbReference>
<dbReference type="GO" id="GO:0071731">
    <property type="term" value="P:response to nitric oxide"/>
    <property type="evidence" value="ECO:0000266"/>
    <property type="project" value="RGD"/>
</dbReference>
<dbReference type="GO" id="GO:0009314">
    <property type="term" value="P:response to radiation"/>
    <property type="evidence" value="ECO:0000250"/>
    <property type="project" value="UniProtKB"/>
</dbReference>
<dbReference type="GO" id="GO:0010269">
    <property type="term" value="P:response to selenium ion"/>
    <property type="evidence" value="ECO:0000270"/>
    <property type="project" value="RGD"/>
</dbReference>
<dbReference type="GO" id="GO:0097068">
    <property type="term" value="P:response to thyroxine"/>
    <property type="evidence" value="ECO:0000270"/>
    <property type="project" value="RGD"/>
</dbReference>
<dbReference type="CDD" id="cd02947">
    <property type="entry name" value="TRX_family"/>
    <property type="match status" value="1"/>
</dbReference>
<dbReference type="FunFam" id="3.40.30.10:FF:000130">
    <property type="entry name" value="Thioredoxin"/>
    <property type="match status" value="1"/>
</dbReference>
<dbReference type="Gene3D" id="3.40.30.10">
    <property type="entry name" value="Glutaredoxin"/>
    <property type="match status" value="1"/>
</dbReference>
<dbReference type="InterPro" id="IPR005746">
    <property type="entry name" value="Thioredoxin"/>
</dbReference>
<dbReference type="InterPro" id="IPR036249">
    <property type="entry name" value="Thioredoxin-like_sf"/>
</dbReference>
<dbReference type="InterPro" id="IPR017937">
    <property type="entry name" value="Thioredoxin_CS"/>
</dbReference>
<dbReference type="InterPro" id="IPR013766">
    <property type="entry name" value="Thioredoxin_domain"/>
</dbReference>
<dbReference type="PANTHER" id="PTHR46115">
    <property type="entry name" value="THIOREDOXIN-LIKE PROTEIN 1"/>
    <property type="match status" value="1"/>
</dbReference>
<dbReference type="Pfam" id="PF00085">
    <property type="entry name" value="Thioredoxin"/>
    <property type="match status" value="1"/>
</dbReference>
<dbReference type="PIRSF" id="PIRSF000077">
    <property type="entry name" value="Thioredoxin"/>
    <property type="match status" value="1"/>
</dbReference>
<dbReference type="PRINTS" id="PR00421">
    <property type="entry name" value="THIOREDOXIN"/>
</dbReference>
<dbReference type="SUPFAM" id="SSF52833">
    <property type="entry name" value="Thioredoxin-like"/>
    <property type="match status" value="1"/>
</dbReference>
<dbReference type="PROSITE" id="PS00194">
    <property type="entry name" value="THIOREDOXIN_1"/>
    <property type="match status" value="1"/>
</dbReference>
<dbReference type="PROSITE" id="PS51352">
    <property type="entry name" value="THIOREDOXIN_2"/>
    <property type="match status" value="1"/>
</dbReference>
<name>THIO_RAT</name>
<feature type="initiator methionine" description="Removed" evidence="5">
    <location>
        <position position="1"/>
    </location>
</feature>
<feature type="chain" id="PRO_0000120011" description="Thioredoxin">
    <location>
        <begin position="2"/>
        <end position="105"/>
    </location>
</feature>
<feature type="domain" description="Thioredoxin" evidence="4">
    <location>
        <begin position="2"/>
        <end position="105"/>
    </location>
</feature>
<feature type="active site" description="Nucleophile" evidence="1">
    <location>
        <position position="32"/>
    </location>
</feature>
<feature type="active site" description="Nucleophile" evidence="1">
    <location>
        <position position="35"/>
    </location>
</feature>
<feature type="site" description="Deprotonates C-terminal active site Cys" evidence="1">
    <location>
        <position position="26"/>
    </location>
</feature>
<feature type="site" description="Contributes to redox potential value" evidence="1">
    <location>
        <position position="33"/>
    </location>
</feature>
<feature type="site" description="Contributes to redox potential value" evidence="1">
    <location>
        <position position="34"/>
    </location>
</feature>
<feature type="modified residue" description="N6-acetyllysine" evidence="2">
    <location>
        <position position="3"/>
    </location>
</feature>
<feature type="modified residue" description="N6-succinyllysine" evidence="3">
    <location>
        <position position="8"/>
    </location>
</feature>
<feature type="modified residue" description="N6-acetyllysine" evidence="2">
    <location>
        <position position="39"/>
    </location>
</feature>
<feature type="modified residue" description="S-nitrosocysteine" evidence="2">
    <location>
        <position position="62"/>
    </location>
</feature>
<feature type="modified residue" description="S-nitrosocysteine" evidence="2">
    <location>
        <position position="69"/>
    </location>
</feature>
<feature type="modified residue" description="S-nitrosocysteine; alternate" evidence="2">
    <location>
        <position position="73"/>
    </location>
</feature>
<feature type="modified residue" description="N6-acetyllysine; alternate" evidence="3">
    <location>
        <position position="94"/>
    </location>
</feature>
<feature type="modified residue" description="N6-succinyllysine; alternate" evidence="3">
    <location>
        <position position="94"/>
    </location>
</feature>
<feature type="disulfide bond" description="Redox-active" evidence="4">
    <location>
        <begin position="32"/>
        <end position="35"/>
    </location>
</feature>
<feature type="disulfide bond" description="Interchain; alternate" evidence="1">
    <location>
        <position position="73"/>
    </location>
</feature>
<keyword id="KW-0007">Acetylation</keyword>
<keyword id="KW-0010">Activator</keyword>
<keyword id="KW-0963">Cytoplasm</keyword>
<keyword id="KW-0903">Direct protein sequencing</keyword>
<keyword id="KW-1015">Disulfide bond</keyword>
<keyword id="KW-0249">Electron transport</keyword>
<keyword id="KW-0539">Nucleus</keyword>
<keyword id="KW-0676">Redox-active center</keyword>
<keyword id="KW-1185">Reference proteome</keyword>
<keyword id="KW-0702">S-nitrosylation</keyword>
<keyword id="KW-0964">Secreted</keyword>
<keyword id="KW-0804">Transcription</keyword>
<keyword id="KW-0805">Transcription regulation</keyword>
<keyword id="KW-0813">Transport</keyword>
<accession>P11232</accession>
<gene>
    <name type="primary">Txn</name>
    <name type="synonym">Txn1</name>
</gene>
<protein>
    <recommendedName>
        <fullName>Thioredoxin</fullName>
        <shortName>Trx</shortName>
    </recommendedName>
</protein>